<sequence>MSNQVMLPRESGSFIASHSKDVSLCEEGISRASEIVFKSLKSNAYSYKTWKDHELHPKEMSKATVDWIFVLDTLNFSFWVDDGLEPWTIRHKGKDFQGYWALCAGINRAIEEGIHLTSPSYYRNITIDDLKHIFRSETSTEMPLLEERAKNLRETGNILAQTFQNSFAHMILLANKSAKLLLSMVINNFDCFRDDGDFCNQKVSFYKRAQILIADTWACFEGKGFGEFPDIDFLTMFADYKVPQGLYDLGVLQFSEALKQKLVTGQLIPHGDQLEMEIRGNSIWAVEKIYLAVKLKAKKSPEFSNMDSLELAQYLNSVIIDFYLWDFSKNVEARASIPCHKTRTIFY</sequence>
<name>QNG1_NEMVE</name>
<dbReference type="EC" id="3.2.2.-" evidence="2"/>
<dbReference type="EMBL" id="DS469722">
    <property type="protein sequence ID" value="EDO34709.1"/>
    <property type="molecule type" value="Genomic_DNA"/>
</dbReference>
<dbReference type="RefSeq" id="XP_001626809.1">
    <property type="nucleotide sequence ID" value="XM_001626759.1"/>
</dbReference>
<dbReference type="SMR" id="A7SNN9"/>
<dbReference type="FunCoup" id="A7SNN9">
    <property type="interactions" value="576"/>
</dbReference>
<dbReference type="STRING" id="45351.A7SNN9"/>
<dbReference type="EnsemblMetazoa" id="EDO34709">
    <property type="protein sequence ID" value="EDO34709"/>
    <property type="gene ID" value="NEMVEDRAFT_v1g230591"/>
</dbReference>
<dbReference type="KEGG" id="nve:5506071"/>
<dbReference type="eggNOG" id="KOG2524">
    <property type="taxonomic scope" value="Eukaryota"/>
</dbReference>
<dbReference type="HOGENOM" id="CLU_036001_2_1_1"/>
<dbReference type="InParanoid" id="A7SNN9"/>
<dbReference type="OMA" id="FSFWSEE"/>
<dbReference type="OrthoDB" id="416777at2759"/>
<dbReference type="PhylomeDB" id="A7SNN9"/>
<dbReference type="Proteomes" id="UP000001593">
    <property type="component" value="Unassembled WGS sequence"/>
</dbReference>
<dbReference type="GO" id="GO:0016787">
    <property type="term" value="F:hydrolase activity"/>
    <property type="evidence" value="ECO:0007669"/>
    <property type="project" value="UniProtKB-KW"/>
</dbReference>
<dbReference type="GO" id="GO:0101030">
    <property type="term" value="P:tRNA-guanine transglycosylation"/>
    <property type="evidence" value="ECO:0000318"/>
    <property type="project" value="GO_Central"/>
</dbReference>
<dbReference type="InterPro" id="IPR019438">
    <property type="entry name" value="Q_salvage"/>
</dbReference>
<dbReference type="PANTHER" id="PTHR21314:SF0">
    <property type="entry name" value="QUEUOSINE 5'-PHOSPHATE N-GLYCOSYLASE_HYDROLASE"/>
    <property type="match status" value="1"/>
</dbReference>
<dbReference type="PANTHER" id="PTHR21314">
    <property type="entry name" value="QUEUOSINE 5'-PHOSPHATE N-GLYCOSYLASE_HYDROLASE-RELATED"/>
    <property type="match status" value="1"/>
</dbReference>
<dbReference type="Pfam" id="PF10343">
    <property type="entry name" value="Q_salvage"/>
    <property type="match status" value="1"/>
</dbReference>
<comment type="function">
    <text evidence="2">Catalyzes the hydrolysis of queuosine 5'-phosphate, releasing the nucleobase queuine (q). Is required for salvage of queuine from exogenous queuosine (Q) that is imported and then converted to queuosine 5'-phosphate intracellularly.</text>
</comment>
<comment type="catalytic activity">
    <reaction evidence="2">
        <text>queuosine 5'-phosphate + H2O = queuine + D-ribose 5-phosphate</text>
        <dbReference type="Rhea" id="RHEA:75387"/>
        <dbReference type="ChEBI" id="CHEBI:15377"/>
        <dbReference type="ChEBI" id="CHEBI:17433"/>
        <dbReference type="ChEBI" id="CHEBI:78346"/>
        <dbReference type="ChEBI" id="CHEBI:194371"/>
    </reaction>
    <physiologicalReaction direction="left-to-right" evidence="2">
        <dbReference type="Rhea" id="RHEA:75388"/>
    </physiologicalReaction>
</comment>
<comment type="miscellaneous">
    <text evidence="2">Eukaryotes lack the canonical genes for de novo biosynthesis of queuosine (Q), present in most bacteria. Therefore, this molecule must be sourced from ingested food and/or the gut microbiota, and metabolized to its corresponding nucleobase, queuine (q), before incorporation into cytoplasmic and mitochondrial tRNAs. Incorporation of q into the anticodon of some tRNAs contributes to translational efficiency and accuracy.</text>
</comment>
<comment type="similarity">
    <text evidence="3">Belongs to the QNG1 protein family.</text>
</comment>
<gene>
    <name type="ORF">v1g230591</name>
</gene>
<accession>A7SNN9</accession>
<keyword id="KW-0378">Hydrolase</keyword>
<keyword id="KW-1185">Reference proteome</keyword>
<reference key="1">
    <citation type="journal article" date="2007" name="Science">
        <title>Sea anemone genome reveals ancestral eumetazoan gene repertoire and genomic organization.</title>
        <authorList>
            <person name="Putnam N.H."/>
            <person name="Srivastava M."/>
            <person name="Hellsten U."/>
            <person name="Dirks B."/>
            <person name="Chapman J."/>
            <person name="Salamov A."/>
            <person name="Terry A."/>
            <person name="Shapiro H."/>
            <person name="Lindquist E."/>
            <person name="Kapitonov V.V."/>
            <person name="Jurka J."/>
            <person name="Genikhovich G."/>
            <person name="Grigoriev I.V."/>
            <person name="Lucas S.M."/>
            <person name="Steele R.E."/>
            <person name="Finnerty J.R."/>
            <person name="Technau U."/>
            <person name="Martindale M.Q."/>
            <person name="Rokhsar D.S."/>
        </authorList>
    </citation>
    <scope>NUCLEOTIDE SEQUENCE [LARGE SCALE GENOMIC DNA]</scope>
    <source>
        <strain>CH2 X CH6</strain>
    </source>
</reference>
<organism>
    <name type="scientific">Nematostella vectensis</name>
    <name type="common">Starlet sea anemone</name>
    <dbReference type="NCBI Taxonomy" id="45351"/>
    <lineage>
        <taxon>Eukaryota</taxon>
        <taxon>Metazoa</taxon>
        <taxon>Cnidaria</taxon>
        <taxon>Anthozoa</taxon>
        <taxon>Hexacorallia</taxon>
        <taxon>Actiniaria</taxon>
        <taxon>Edwardsiidae</taxon>
        <taxon>Nematostella</taxon>
    </lineage>
</organism>
<protein>
    <recommendedName>
        <fullName evidence="2">Queuosine 5'-phosphate N-glycosylase/hydrolase</fullName>
        <ecNumber evidence="2">3.2.2.-</ecNumber>
    </recommendedName>
    <alternativeName>
        <fullName evidence="2">Queuosine-nucleotide N-glycosylase/hydrolase</fullName>
    </alternativeName>
</protein>
<proteinExistence type="inferred from homology"/>
<evidence type="ECO:0000250" key="1">
    <source>
        <dbReference type="UniProtKB" id="D1C7A6"/>
    </source>
</evidence>
<evidence type="ECO:0000250" key="2">
    <source>
        <dbReference type="UniProtKB" id="Q5T6V5"/>
    </source>
</evidence>
<evidence type="ECO:0000305" key="3"/>
<feature type="chain" id="PRO_0000327923" description="Queuosine 5'-phosphate N-glycosylase/hydrolase">
    <location>
        <begin position="1"/>
        <end position="347"/>
    </location>
</feature>
<feature type="active site" description="Nucleophile or transition state stabilizer" evidence="1">
    <location>
        <position position="239"/>
    </location>
</feature>
<feature type="binding site" evidence="2">
    <location>
        <position position="53"/>
    </location>
    <ligand>
        <name>queuine</name>
        <dbReference type="ChEBI" id="CHEBI:17433"/>
    </ligand>
</feature>
<feature type="binding site" evidence="2">
    <location>
        <position position="237"/>
    </location>
    <ligand>
        <name>queuine</name>
        <dbReference type="ChEBI" id="CHEBI:17433"/>
    </ligand>
</feature>
<feature type="binding site" evidence="2">
    <location>
        <position position="239"/>
    </location>
    <ligand>
        <name>queuine</name>
        <dbReference type="ChEBI" id="CHEBI:17433"/>
    </ligand>
</feature>
<feature type="binding site" evidence="2">
    <location>
        <position position="321"/>
    </location>
    <ligand>
        <name>queuine</name>
        <dbReference type="ChEBI" id="CHEBI:17433"/>
    </ligand>
</feature>
<feature type="binding site" evidence="2">
    <location>
        <position position="326"/>
    </location>
    <ligand>
        <name>queuine</name>
        <dbReference type="ChEBI" id="CHEBI:17433"/>
    </ligand>
</feature>